<keyword id="KW-0012">Acyltransferase</keyword>
<keyword id="KW-0963">Cytoplasm</keyword>
<keyword id="KW-0808">Transferase</keyword>
<sequence>MSLLGFPVEWRVSDGMVDYKAALDFMTSRVDGILEGRESEMVWLLEHPSVYTAGVSAKDGELLSENKFQVVRTTRGGKYSYHGPGQRVVYVMLHLGRRDKRDVRLYVRNLGLWVVGTLAEFGIDSHFDDDNTGVWVQYSRQAKKIAAFGIAIRRWVTYHGFSVNISTDLGCYSGIVPCGIAGSHVTSLQDLGVTVPFEEFDAVLQQKFDTIFLQ</sequence>
<dbReference type="EC" id="2.3.1.181" evidence="1"/>
<dbReference type="EMBL" id="CP000030">
    <property type="protein sequence ID" value="AAV86847.1"/>
    <property type="molecule type" value="Genomic_DNA"/>
</dbReference>
<dbReference type="RefSeq" id="WP_010265630.1">
    <property type="nucleotide sequence ID" value="NZ_AFMU01000010.1"/>
</dbReference>
<dbReference type="SMR" id="Q5PA33"/>
<dbReference type="GeneID" id="7397903"/>
<dbReference type="KEGG" id="ama:AM941"/>
<dbReference type="PATRIC" id="fig|320483.3.peg.823"/>
<dbReference type="HOGENOM" id="CLU_035168_3_0_5"/>
<dbReference type="UniPathway" id="UPA00538">
    <property type="reaction ID" value="UER00592"/>
</dbReference>
<dbReference type="GO" id="GO:0005737">
    <property type="term" value="C:cytoplasm"/>
    <property type="evidence" value="ECO:0007669"/>
    <property type="project" value="UniProtKB-SubCell"/>
</dbReference>
<dbReference type="GO" id="GO:0033819">
    <property type="term" value="F:lipoyl(octanoyl) transferase activity"/>
    <property type="evidence" value="ECO:0007669"/>
    <property type="project" value="UniProtKB-EC"/>
</dbReference>
<dbReference type="GO" id="GO:0036211">
    <property type="term" value="P:protein modification process"/>
    <property type="evidence" value="ECO:0007669"/>
    <property type="project" value="InterPro"/>
</dbReference>
<dbReference type="CDD" id="cd16444">
    <property type="entry name" value="LipB"/>
    <property type="match status" value="1"/>
</dbReference>
<dbReference type="Gene3D" id="3.30.930.10">
    <property type="entry name" value="Bira Bifunctional Protein, Domain 2"/>
    <property type="match status" value="1"/>
</dbReference>
<dbReference type="HAMAP" id="MF_00013">
    <property type="entry name" value="LipB"/>
    <property type="match status" value="1"/>
</dbReference>
<dbReference type="InterPro" id="IPR045864">
    <property type="entry name" value="aa-tRNA-synth_II/BPL/LPL"/>
</dbReference>
<dbReference type="InterPro" id="IPR004143">
    <property type="entry name" value="BPL_LPL_catalytic"/>
</dbReference>
<dbReference type="InterPro" id="IPR000544">
    <property type="entry name" value="Octanoyltransferase"/>
</dbReference>
<dbReference type="NCBIfam" id="TIGR00214">
    <property type="entry name" value="lipB"/>
    <property type="match status" value="1"/>
</dbReference>
<dbReference type="NCBIfam" id="NF010921">
    <property type="entry name" value="PRK14341.1"/>
    <property type="match status" value="1"/>
</dbReference>
<dbReference type="PANTHER" id="PTHR10993:SF7">
    <property type="entry name" value="LIPOYLTRANSFERASE 2, MITOCHONDRIAL-RELATED"/>
    <property type="match status" value="1"/>
</dbReference>
<dbReference type="PANTHER" id="PTHR10993">
    <property type="entry name" value="OCTANOYLTRANSFERASE"/>
    <property type="match status" value="1"/>
</dbReference>
<dbReference type="Pfam" id="PF21948">
    <property type="entry name" value="LplA-B_cat"/>
    <property type="match status" value="1"/>
</dbReference>
<dbReference type="PIRSF" id="PIRSF016262">
    <property type="entry name" value="LPLase"/>
    <property type="match status" value="1"/>
</dbReference>
<dbReference type="SUPFAM" id="SSF55681">
    <property type="entry name" value="Class II aaRS and biotin synthetases"/>
    <property type="match status" value="1"/>
</dbReference>
<dbReference type="PROSITE" id="PS51733">
    <property type="entry name" value="BPL_LPL_CATALYTIC"/>
    <property type="match status" value="1"/>
</dbReference>
<gene>
    <name evidence="1" type="primary">lipB</name>
    <name type="ordered locus">AM941</name>
</gene>
<organism>
    <name type="scientific">Anaplasma marginale (strain St. Maries)</name>
    <dbReference type="NCBI Taxonomy" id="234826"/>
    <lineage>
        <taxon>Bacteria</taxon>
        <taxon>Pseudomonadati</taxon>
        <taxon>Pseudomonadota</taxon>
        <taxon>Alphaproteobacteria</taxon>
        <taxon>Rickettsiales</taxon>
        <taxon>Anaplasmataceae</taxon>
        <taxon>Anaplasma</taxon>
    </lineage>
</organism>
<proteinExistence type="inferred from homology"/>
<comment type="function">
    <text evidence="1">Catalyzes the transfer of endogenously produced octanoic acid from octanoyl-acyl-carrier-protein onto the lipoyl domains of lipoate-dependent enzymes. Lipoyl-ACP can also act as a substrate although octanoyl-ACP is likely to be the physiological substrate.</text>
</comment>
<comment type="catalytic activity">
    <reaction evidence="1">
        <text>octanoyl-[ACP] + L-lysyl-[protein] = N(6)-octanoyl-L-lysyl-[protein] + holo-[ACP] + H(+)</text>
        <dbReference type="Rhea" id="RHEA:17665"/>
        <dbReference type="Rhea" id="RHEA-COMP:9636"/>
        <dbReference type="Rhea" id="RHEA-COMP:9685"/>
        <dbReference type="Rhea" id="RHEA-COMP:9752"/>
        <dbReference type="Rhea" id="RHEA-COMP:9928"/>
        <dbReference type="ChEBI" id="CHEBI:15378"/>
        <dbReference type="ChEBI" id="CHEBI:29969"/>
        <dbReference type="ChEBI" id="CHEBI:64479"/>
        <dbReference type="ChEBI" id="CHEBI:78463"/>
        <dbReference type="ChEBI" id="CHEBI:78809"/>
        <dbReference type="EC" id="2.3.1.181"/>
    </reaction>
</comment>
<comment type="pathway">
    <text evidence="1">Protein modification; protein lipoylation via endogenous pathway; protein N(6)-(lipoyl)lysine from octanoyl-[acyl-carrier-protein]: step 1/2.</text>
</comment>
<comment type="subcellular location">
    <subcellularLocation>
        <location evidence="1">Cytoplasm</location>
    </subcellularLocation>
</comment>
<comment type="miscellaneous">
    <text evidence="1">In the reaction, the free carboxyl group of octanoic acid is attached via an amide linkage to the epsilon-amino group of a specific lysine residue of lipoyl domains of lipoate-dependent enzymes.</text>
</comment>
<comment type="similarity">
    <text evidence="1">Belongs to the LipB family.</text>
</comment>
<evidence type="ECO:0000255" key="1">
    <source>
        <dbReference type="HAMAP-Rule" id="MF_00013"/>
    </source>
</evidence>
<evidence type="ECO:0000255" key="2">
    <source>
        <dbReference type="PROSITE-ProRule" id="PRU01067"/>
    </source>
</evidence>
<accession>Q5PA33</accession>
<protein>
    <recommendedName>
        <fullName evidence="1">Octanoyltransferase</fullName>
        <ecNumber evidence="1">2.3.1.181</ecNumber>
    </recommendedName>
    <alternativeName>
        <fullName evidence="1">Lipoate-protein ligase B</fullName>
    </alternativeName>
    <alternativeName>
        <fullName evidence="1">Lipoyl/octanoyl transferase</fullName>
    </alternativeName>
    <alternativeName>
        <fullName evidence="1">Octanoyl-[acyl-carrier-protein]-protein N-octanoyltransferase</fullName>
    </alternativeName>
</protein>
<feature type="chain" id="PRO_0000242704" description="Octanoyltransferase">
    <location>
        <begin position="1"/>
        <end position="214"/>
    </location>
</feature>
<feature type="domain" description="BPL/LPL catalytic" evidence="2">
    <location>
        <begin position="36"/>
        <end position="214"/>
    </location>
</feature>
<feature type="active site" description="Acyl-thioester intermediate" evidence="1">
    <location>
        <position position="178"/>
    </location>
</feature>
<feature type="binding site" evidence="1">
    <location>
        <begin position="75"/>
        <end position="82"/>
    </location>
    <ligand>
        <name>substrate</name>
    </ligand>
</feature>
<feature type="binding site" evidence="1">
    <location>
        <begin position="147"/>
        <end position="149"/>
    </location>
    <ligand>
        <name>substrate</name>
    </ligand>
</feature>
<feature type="binding site" evidence="1">
    <location>
        <begin position="160"/>
        <end position="162"/>
    </location>
    <ligand>
        <name>substrate</name>
    </ligand>
</feature>
<feature type="site" description="Lowers pKa of active site Cys" evidence="1">
    <location>
        <position position="144"/>
    </location>
</feature>
<name>LIPB_ANAMM</name>
<reference key="1">
    <citation type="journal article" date="2005" name="Proc. Natl. Acad. Sci. U.S.A.">
        <title>Complete genome sequencing of Anaplasma marginale reveals that the surface is skewed to two superfamilies of outer membrane proteins.</title>
        <authorList>
            <person name="Brayton K.A."/>
            <person name="Kappmeyer L.S."/>
            <person name="Herndon D.R."/>
            <person name="Dark M.J."/>
            <person name="Tibbals D.L."/>
            <person name="Palmer G.H."/>
            <person name="McGuire T.C."/>
            <person name="Knowles D.P. Jr."/>
        </authorList>
    </citation>
    <scope>NUCLEOTIDE SEQUENCE [LARGE SCALE GENOMIC DNA]</scope>
    <source>
        <strain>St. Maries</strain>
    </source>
</reference>